<comment type="function">
    <text evidence="1">Nontoxic peptide.</text>
</comment>
<comment type="subcellular location">
    <subcellularLocation>
        <location evidence="1">Secreted</location>
    </subcellularLocation>
</comment>
<comment type="tissue specificity">
    <text>Expressed by the venom gland.</text>
</comment>
<comment type="similarity">
    <text evidence="3">Belongs to the secapin family.</text>
</comment>
<accession>Q7YWA7</accession>
<reference key="1">
    <citation type="submission" date="2002-02" db="EMBL/GenBank/DDBJ databases">
        <title>Cloning and sequencing of genes encoding preprosecapin from the venom of wasps and yellowjackets.</title>
        <authorList>
            <person name="Zhang S.F."/>
            <person name="Shi W.J."/>
            <person name="Zhang C.X."/>
            <person name="Cheng J.A."/>
        </authorList>
    </citation>
    <scope>NUCLEOTIDE SEQUENCE [MRNA]</scope>
    <source>
        <tissue>Venom gland</tissue>
    </source>
</reference>
<dbReference type="EMBL" id="AF488556">
    <property type="protein sequence ID" value="AAQ06325.1"/>
    <property type="molecule type" value="mRNA"/>
</dbReference>
<dbReference type="GO" id="GO:0005576">
    <property type="term" value="C:extracellular region"/>
    <property type="evidence" value="ECO:0007669"/>
    <property type="project" value="UniProtKB-SubCell"/>
</dbReference>
<dbReference type="InterPro" id="IPR020128">
    <property type="entry name" value="Secapin"/>
</dbReference>
<dbReference type="Pfam" id="PF17521">
    <property type="entry name" value="Secapin"/>
    <property type="match status" value="1"/>
</dbReference>
<evidence type="ECO:0000250" key="1"/>
<evidence type="ECO:0000255" key="2"/>
<evidence type="ECO:0000305" key="3"/>
<sequence length="77" mass="8680">MKNYSKNATYLITVLLFSFVAMLLIIPSKCEAVSNDMQPLEARSADLVPEPRYIIDVPPRCPPGSKFIKNRCRVIVP</sequence>
<organism>
    <name type="scientific">Vespa magnifica</name>
    <name type="common">Hornet</name>
    <dbReference type="NCBI Taxonomy" id="202807"/>
    <lineage>
        <taxon>Eukaryota</taxon>
        <taxon>Metazoa</taxon>
        <taxon>Ecdysozoa</taxon>
        <taxon>Arthropoda</taxon>
        <taxon>Hexapoda</taxon>
        <taxon>Insecta</taxon>
        <taxon>Pterygota</taxon>
        <taxon>Neoptera</taxon>
        <taxon>Endopterygota</taxon>
        <taxon>Hymenoptera</taxon>
        <taxon>Apocrita</taxon>
        <taxon>Aculeata</taxon>
        <taxon>Vespoidea</taxon>
        <taxon>Vespidae</taxon>
        <taxon>Vespinae</taxon>
        <taxon>Vespa</taxon>
    </lineage>
</organism>
<name>SECP_VESMG</name>
<feature type="signal peptide" evidence="2">
    <location>
        <begin position="1"/>
        <end position="32"/>
    </location>
</feature>
<feature type="propeptide" id="PRO_0000246020" evidence="1">
    <location>
        <begin position="33"/>
        <end position="52"/>
    </location>
</feature>
<feature type="peptide" id="PRO_0000246021" description="Secapin">
    <location>
        <begin position="53"/>
        <end position="77"/>
    </location>
</feature>
<feature type="disulfide bond" evidence="1">
    <location>
        <begin position="61"/>
        <end position="72"/>
    </location>
</feature>
<keyword id="KW-1015">Disulfide bond</keyword>
<keyword id="KW-0964">Secreted</keyword>
<keyword id="KW-0732">Signal</keyword>
<protein>
    <recommendedName>
        <fullName>Secapin</fullName>
    </recommendedName>
</protein>
<proteinExistence type="evidence at transcript level"/>